<gene>
    <name evidence="1" type="primary">rpmF</name>
    <name type="ordered locus">Wbm0616</name>
</gene>
<keyword id="KW-1185">Reference proteome</keyword>
<keyword id="KW-0687">Ribonucleoprotein</keyword>
<keyword id="KW-0689">Ribosomal protein</keyword>
<reference key="1">
    <citation type="journal article" date="2005" name="PLoS Biol.">
        <title>The Wolbachia genome of Brugia malayi: endosymbiont evolution within a human pathogenic nematode.</title>
        <authorList>
            <person name="Foster J."/>
            <person name="Ganatra M."/>
            <person name="Kamal I."/>
            <person name="Ware J."/>
            <person name="Makarova K."/>
            <person name="Ivanova N."/>
            <person name="Bhattacharyya A."/>
            <person name="Kapatral V."/>
            <person name="Kumar S."/>
            <person name="Posfai J."/>
            <person name="Vincze T."/>
            <person name="Ingram J."/>
            <person name="Moran L."/>
            <person name="Lapidus A."/>
            <person name="Omelchenko M."/>
            <person name="Kyrpides N."/>
            <person name="Ghedin E."/>
            <person name="Wang S."/>
            <person name="Goltsman E."/>
            <person name="Joukov V."/>
            <person name="Ostrovskaya O."/>
            <person name="Tsukerman K."/>
            <person name="Mazur M."/>
            <person name="Comb D."/>
            <person name="Koonin E."/>
            <person name="Slatko B."/>
        </authorList>
    </citation>
    <scope>NUCLEOTIDE SEQUENCE [LARGE SCALE GENOMIC DNA]</scope>
    <source>
        <strain>TRS</strain>
    </source>
</reference>
<comment type="similarity">
    <text evidence="1">Belongs to the bacterial ribosomal protein bL32 family.</text>
</comment>
<comment type="sequence caution" evidence="3">
    <conflict type="erroneous initiation">
        <sequence resource="EMBL-CDS" id="AAW71204"/>
    </conflict>
</comment>
<protein>
    <recommendedName>
        <fullName evidence="1">Large ribosomal subunit protein bL32</fullName>
    </recommendedName>
    <alternativeName>
        <fullName evidence="3">50S ribosomal protein L32</fullName>
    </alternativeName>
</protein>
<accession>Q5GS20</accession>
<evidence type="ECO:0000255" key="1">
    <source>
        <dbReference type="HAMAP-Rule" id="MF_00340"/>
    </source>
</evidence>
<evidence type="ECO:0000256" key="2">
    <source>
        <dbReference type="SAM" id="MobiDB-lite"/>
    </source>
</evidence>
<evidence type="ECO:0000305" key="3"/>
<organism>
    <name type="scientific">Wolbachia sp. subsp. Brugia malayi (strain TRS)</name>
    <dbReference type="NCBI Taxonomy" id="292805"/>
    <lineage>
        <taxon>Bacteria</taxon>
        <taxon>Pseudomonadati</taxon>
        <taxon>Pseudomonadota</taxon>
        <taxon>Alphaproteobacteria</taxon>
        <taxon>Rickettsiales</taxon>
        <taxon>Anaplasmataceae</taxon>
        <taxon>Wolbachieae</taxon>
        <taxon>Wolbachia</taxon>
    </lineage>
</organism>
<dbReference type="EMBL" id="AE017321">
    <property type="protein sequence ID" value="AAW71204.1"/>
    <property type="status" value="ALT_INIT"/>
    <property type="molecule type" value="Genomic_DNA"/>
</dbReference>
<dbReference type="RefSeq" id="WP_011256814.1">
    <property type="nucleotide sequence ID" value="NC_006833.1"/>
</dbReference>
<dbReference type="SMR" id="Q5GS20"/>
<dbReference type="STRING" id="292805.Wbm0616"/>
<dbReference type="KEGG" id="wbm:Wbm0616"/>
<dbReference type="eggNOG" id="COG0333">
    <property type="taxonomic scope" value="Bacteria"/>
</dbReference>
<dbReference type="HOGENOM" id="CLU_129084_2_0_5"/>
<dbReference type="Proteomes" id="UP000000534">
    <property type="component" value="Chromosome"/>
</dbReference>
<dbReference type="GO" id="GO:0015934">
    <property type="term" value="C:large ribosomal subunit"/>
    <property type="evidence" value="ECO:0007669"/>
    <property type="project" value="InterPro"/>
</dbReference>
<dbReference type="GO" id="GO:0003735">
    <property type="term" value="F:structural constituent of ribosome"/>
    <property type="evidence" value="ECO:0007669"/>
    <property type="project" value="InterPro"/>
</dbReference>
<dbReference type="GO" id="GO:0006412">
    <property type="term" value="P:translation"/>
    <property type="evidence" value="ECO:0007669"/>
    <property type="project" value="UniProtKB-UniRule"/>
</dbReference>
<dbReference type="Gene3D" id="1.20.5.640">
    <property type="entry name" value="Single helix bin"/>
    <property type="match status" value="1"/>
</dbReference>
<dbReference type="HAMAP" id="MF_00340">
    <property type="entry name" value="Ribosomal_bL32"/>
    <property type="match status" value="1"/>
</dbReference>
<dbReference type="InterPro" id="IPR002677">
    <property type="entry name" value="Ribosomal_bL32"/>
</dbReference>
<dbReference type="InterPro" id="IPR044957">
    <property type="entry name" value="Ribosomal_bL32_bact"/>
</dbReference>
<dbReference type="InterPro" id="IPR011332">
    <property type="entry name" value="Ribosomal_zn-bd"/>
</dbReference>
<dbReference type="NCBIfam" id="TIGR01031">
    <property type="entry name" value="rpmF_bact"/>
    <property type="match status" value="1"/>
</dbReference>
<dbReference type="PANTHER" id="PTHR35534">
    <property type="entry name" value="50S RIBOSOMAL PROTEIN L32"/>
    <property type="match status" value="1"/>
</dbReference>
<dbReference type="PANTHER" id="PTHR35534:SF1">
    <property type="entry name" value="LARGE RIBOSOMAL SUBUNIT PROTEIN BL32"/>
    <property type="match status" value="1"/>
</dbReference>
<dbReference type="Pfam" id="PF01783">
    <property type="entry name" value="Ribosomal_L32p"/>
    <property type="match status" value="1"/>
</dbReference>
<dbReference type="SUPFAM" id="SSF57829">
    <property type="entry name" value="Zn-binding ribosomal proteins"/>
    <property type="match status" value="1"/>
</dbReference>
<name>RL32_WOLTR</name>
<proteinExistence type="inferred from homology"/>
<sequence>MAVPKRKKSKSRRNMHRSHHAIKPKNIVVCTTTGEFMLPHSIAVDGSYKGKRVFIKQQAE</sequence>
<feature type="chain" id="PRO_0000225777" description="Large ribosomal subunit protein bL32">
    <location>
        <begin position="1"/>
        <end position="60"/>
    </location>
</feature>
<feature type="region of interest" description="Disordered" evidence="2">
    <location>
        <begin position="1"/>
        <end position="23"/>
    </location>
</feature>